<evidence type="ECO:0000250" key="1">
    <source>
        <dbReference type="UniProtKB" id="O97366"/>
    </source>
</evidence>
<evidence type="ECO:0000250" key="2">
    <source>
        <dbReference type="UniProtKB" id="Q9GRW0"/>
    </source>
</evidence>
<evidence type="ECO:0000250" key="3">
    <source>
        <dbReference type="UniProtKB" id="Q9VB68"/>
    </source>
</evidence>
<evidence type="ECO:0000255" key="4"/>
<evidence type="ECO:0000255" key="5">
    <source>
        <dbReference type="PROSITE-ProRule" id="PRU00274"/>
    </source>
</evidence>
<evidence type="ECO:0000255" key="6">
    <source>
        <dbReference type="PROSITE-ProRule" id="PRU00498"/>
    </source>
</evidence>
<evidence type="ECO:0000255" key="7">
    <source>
        <dbReference type="PROSITE-ProRule" id="PRU01236"/>
    </source>
</evidence>
<evidence type="ECO:0000269" key="8">
    <source>
    </source>
</evidence>
<evidence type="ECO:0000269" key="9">
    <source>
    </source>
</evidence>
<evidence type="ECO:0000269" key="10">
    <source>
    </source>
</evidence>
<evidence type="ECO:0000269" key="11">
    <source>
    </source>
</evidence>
<evidence type="ECO:0000269" key="12">
    <source>
    </source>
</evidence>
<evidence type="ECO:0000269" key="13">
    <source>
    </source>
</evidence>
<evidence type="ECO:0000269" key="14">
    <source>
    </source>
</evidence>
<evidence type="ECO:0000305" key="15"/>
<evidence type="ECO:0000305" key="16">
    <source>
    </source>
</evidence>
<evidence type="ECO:0000312" key="17">
    <source>
        <dbReference type="FlyBase" id="FBgn0000533"/>
    </source>
</evidence>
<evidence type="ECO:0000312" key="18">
    <source>
        <dbReference type="Proteomes" id="UP000000803"/>
    </source>
</evidence>
<accession>P13582</accession>
<accession>Q9VF90</accession>
<feature type="signal peptide" evidence="15">
    <location>
        <begin position="1"/>
        <end position="19"/>
    </location>
</feature>
<feature type="propeptide" id="PRO_0000028133" description="Activation peptide" evidence="4">
    <location>
        <begin position="20"/>
        <end position="127"/>
    </location>
</feature>
<feature type="chain" id="PRO_0000028134" description="Serine protease ea">
    <location>
        <begin position="128"/>
        <end position="392"/>
    </location>
</feature>
<feature type="domain" description="Clip" evidence="7">
    <location>
        <begin position="36"/>
        <end position="89"/>
    </location>
</feature>
<feature type="domain" description="Peptidase S1" evidence="5">
    <location>
        <begin position="128"/>
        <end position="391"/>
    </location>
</feature>
<feature type="active site" description="Charge relay system" evidence="5">
    <location>
        <position position="173"/>
    </location>
</feature>
<feature type="active site" description="Charge relay system" evidence="5">
    <location>
        <position position="240"/>
    </location>
</feature>
<feature type="active site" description="Charge relay system" evidence="5">
    <location>
        <position position="338"/>
    </location>
</feature>
<feature type="binding site" evidence="1">
    <location>
        <position position="193"/>
    </location>
    <ligand>
        <name>Ca(2+)</name>
        <dbReference type="ChEBI" id="CHEBI:29108"/>
    </ligand>
</feature>
<feature type="binding site" evidence="2">
    <location>
        <position position="195"/>
    </location>
    <ligand>
        <name>Ca(2+)</name>
        <dbReference type="ChEBI" id="CHEBI:29108"/>
    </ligand>
</feature>
<feature type="binding site" evidence="1">
    <location>
        <position position="198"/>
    </location>
    <ligand>
        <name>Ca(2+)</name>
        <dbReference type="ChEBI" id="CHEBI:29108"/>
    </ligand>
</feature>
<feature type="binding site" evidence="1">
    <location>
        <position position="201"/>
    </location>
    <ligand>
        <name>Ca(2+)</name>
        <dbReference type="ChEBI" id="CHEBI:29108"/>
    </ligand>
</feature>
<feature type="glycosylation site" description="N-linked (GlcNAc...) asparagine" evidence="6">
    <location>
        <position position="107"/>
    </location>
</feature>
<feature type="disulfide bond" evidence="7">
    <location>
        <begin position="37"/>
        <end position="88"/>
    </location>
</feature>
<feature type="disulfide bond" evidence="7">
    <location>
        <begin position="47"/>
        <end position="78"/>
    </location>
</feature>
<feature type="disulfide bond" evidence="7">
    <location>
        <begin position="53"/>
        <end position="89"/>
    </location>
</feature>
<feature type="disulfide bond" evidence="3">
    <location>
        <begin position="120"/>
        <end position="260"/>
    </location>
</feature>
<feature type="disulfide bond" evidence="5">
    <location>
        <begin position="158"/>
        <end position="174"/>
    </location>
</feature>
<feature type="disulfide bond" evidence="3">
    <location>
        <begin position="202"/>
        <end position="212"/>
    </location>
</feature>
<feature type="disulfide bond" evidence="5">
    <location>
        <begin position="307"/>
        <end position="324"/>
    </location>
</feature>
<feature type="disulfide bond" evidence="5">
    <location>
        <begin position="334"/>
        <end position="367"/>
    </location>
</feature>
<feature type="mutagenesis site" description="Prevents cleavage of the propeptide." evidence="11">
    <original>R</original>
    <variation>V</variation>
    <location>
        <position position="127"/>
    </location>
</feature>
<feature type="mutagenesis site" description="In EA 20N; results in extreme lateralized embryonic pattern where the most dorsal pattern elements (e.g. dorsal cuticles) and the most ventral pattern element (mesoderm) are absent." evidence="13">
    <original>G</original>
    <variation>E</variation>
    <location>
        <position position="131"/>
    </location>
</feature>
<feature type="mutagenesis site" description="In EA 111; results in temperature-sensitive defects in dorsoventral patterning." evidence="13">
    <original>S</original>
    <variation>L</variation>
    <location>
        <position position="172"/>
    </location>
</feature>
<feature type="mutagenesis site" description="Probable loss of calcium binding which might affect catalytic activity. Results in defective dorsoventral patterning showing a complete dorsalization in which there is no ventral furrow or headfold, cells at the posterior do not migrate, and multiple symmetric folds appear along the anterior-posterior axis of the embryo." evidence="8">
    <original>E</original>
    <variation>A</variation>
    <variation>K</variation>
    <location>
        <position position="193"/>
    </location>
</feature>
<feature type="mutagenesis site" description="In EA 84B; results in weakly ventralized embryos with ventral denticle bands that are approximately normal in width and the filzkorper have the normal tubular morphology." evidence="13">
    <original>G</original>
    <variation>S</variation>
    <location>
        <position position="283"/>
    </location>
</feature>
<feature type="mutagenesis site" description="In EA 818; results in temperature-sensitive defects in dorsoventral patterning." evidence="13">
    <original>C</original>
    <variation>Y</variation>
    <location>
        <position position="324"/>
    </location>
</feature>
<feature type="mutagenesis site" description="In EA 83I and EA 4102; results in ventralized embryos." evidence="13">
    <original>A</original>
    <variation>V</variation>
    <location>
        <position position="325"/>
    </location>
</feature>
<feature type="mutagenesis site" description="In EA 125.3; results in ventralized embryos." evidence="13">
    <original>R</original>
    <variation>C</variation>
    <location>
        <position position="335"/>
    </location>
</feature>
<feature type="mutagenesis site" description="In EA QGDS; results in lateralised embryos." evidence="13">
    <original>R</original>
    <variation>Q</variation>
    <location>
        <position position="335"/>
    </location>
</feature>
<feature type="mutagenesis site" description="In EA 12A; results in weakly ventralized embryos with ventral denticle bands that are approximately normal in width and the filzkorper have the normal tubular morphology." evidence="13">
    <original>G</original>
    <variation>S</variation>
    <location>
        <position position="336"/>
    </location>
</feature>
<feature type="mutagenesis site" description="Loss of catalytic activity results in defective dorsoventral patterning characterized by a complete dorsalization in which there is no ventral furrow or headfold, cells at the posterior do not migrate, and multiple symmetric folds appear along the anterior-posterior axis of the embryo." evidence="8 11 13">
    <original>S</original>
    <variation>A</variation>
    <location>
        <position position="338"/>
    </location>
</feature>
<feature type="mutagenesis site" description="In EA 1; results in completely dorsalized embryos." evidence="13">
    <original>G</original>
    <variation>R</variation>
    <location>
        <position position="339"/>
    </location>
</feature>
<feature type="mutagenesis site" description="In EA 5.13; results in extreme lateralized embryonic pattern where the most dorsal pattern elements (e.g. dorsal cuticle) and the most ventral pattern element (mesoderm) are absent." evidence="13">
    <original>V</original>
    <variation>M</variation>
    <location>
        <position position="360"/>
    </location>
</feature>
<feature type="mutagenesis site" description="In EA 8; results in completely dorsalized embryos." evidence="13">
    <original>G</original>
    <variation>E</variation>
    <location>
        <position position="363"/>
    </location>
</feature>
<feature type="mutagenesis site" description="In EA 161.13; results in weakly ventralized embryos with ventral denticle bands that are approximately normal in width and the filzkorper have the normal tubular morphology." evidence="13">
    <original>G</original>
    <variation>R</variation>
    <location>
        <position position="371"/>
    </location>
</feature>
<feature type="mutagenesis site" description="Probable loss of catalytic activity results in partially defective dorsoventral patterning; during gastrulation, shows defective ventralization; in late embryogenesis results in moderately dorsalized embryos presenting defective lateral filzkorper, head skeleton and ventral denticles." evidence="8">
    <original>P</original>
    <variation>I</variation>
    <variation>Y</variation>
    <location>
        <position position="373"/>
    </location>
</feature>
<feature type="mutagenesis site" description="In EA 5022; probable loss of catalytic activity results in partially defective dorsoventral patterning; in gastrulation, shows an intermediate ventralization with the headfold prominent on the dorsal side and some anteriorward displacement of posterior cells along the dorsal site; in late embryogenesis, shows partial filzkorper and head skeleton, as well as ventral denticles erroneously in dorsal position." evidence="8 13">
    <original>P</original>
    <variation>S</variation>
    <location>
        <position position="373"/>
    </location>
</feature>
<feature type="sequence conflict" description="In Ref. 2; AAF55170/AAQ22447." evidence="15" ref="2">
    <original>S</original>
    <variation>F</variation>
    <location>
        <position position="302"/>
    </location>
</feature>
<dbReference type="EC" id="3.4.21.-" evidence="5"/>
<dbReference type="EMBL" id="J03154">
    <property type="protein sequence ID" value="AAA28496.1"/>
    <property type="molecule type" value="mRNA"/>
</dbReference>
<dbReference type="EMBL" id="AE014297">
    <property type="protein sequence ID" value="AAF55170.1"/>
    <property type="molecule type" value="Genomic_DNA"/>
</dbReference>
<dbReference type="EMBL" id="BT009978">
    <property type="protein sequence ID" value="AAQ22447.1"/>
    <property type="molecule type" value="mRNA"/>
</dbReference>
<dbReference type="PIR" id="A30100">
    <property type="entry name" value="A30100"/>
</dbReference>
<dbReference type="RefSeq" id="NP_524362.2">
    <property type="nucleotide sequence ID" value="NM_079638.3"/>
</dbReference>
<dbReference type="SMR" id="P13582"/>
<dbReference type="BioGRID" id="66921">
    <property type="interactions" value="14"/>
</dbReference>
<dbReference type="DIP" id="DIP-18843N"/>
<dbReference type="FunCoup" id="P13582">
    <property type="interactions" value="14"/>
</dbReference>
<dbReference type="IntAct" id="P13582">
    <property type="interactions" value="1"/>
</dbReference>
<dbReference type="STRING" id="7227.FBpp0082539"/>
<dbReference type="MEROPS" id="S01.201"/>
<dbReference type="GlyGen" id="P13582">
    <property type="glycosylation" value="1 site"/>
</dbReference>
<dbReference type="PaxDb" id="7227-FBpp0082539"/>
<dbReference type="DNASU" id="41858"/>
<dbReference type="EnsemblMetazoa" id="FBtr0083083">
    <property type="protein sequence ID" value="FBpp0082539"/>
    <property type="gene ID" value="FBgn0000533"/>
</dbReference>
<dbReference type="GeneID" id="41858"/>
<dbReference type="KEGG" id="dme:Dmel_CG4920"/>
<dbReference type="UCSC" id="CG4920-RA">
    <property type="organism name" value="d. melanogaster"/>
</dbReference>
<dbReference type="AGR" id="FB:FBgn0000533"/>
<dbReference type="CTD" id="41858"/>
<dbReference type="FlyBase" id="FBgn0000533">
    <property type="gene designation" value="ea"/>
</dbReference>
<dbReference type="VEuPathDB" id="VectorBase:FBgn0000533"/>
<dbReference type="eggNOG" id="KOG3627">
    <property type="taxonomic scope" value="Eukaryota"/>
</dbReference>
<dbReference type="GeneTree" id="ENSGT00940000173909"/>
<dbReference type="InParanoid" id="P13582"/>
<dbReference type="OrthoDB" id="9028152at2759"/>
<dbReference type="PhylomeDB" id="P13582"/>
<dbReference type="Reactome" id="R-DME-209442">
    <property type="pathway name" value="Formation of the trans-membrane 'signalling complex'"/>
</dbReference>
<dbReference type="BioGRID-ORCS" id="41858">
    <property type="hits" value="0 hits in 1 CRISPR screen"/>
</dbReference>
<dbReference type="GenomeRNAi" id="41858"/>
<dbReference type="PRO" id="PR:P13582"/>
<dbReference type="Proteomes" id="UP000000803">
    <property type="component" value="Chromosome 3R"/>
</dbReference>
<dbReference type="Bgee" id="FBgn0000533">
    <property type="expression patterns" value="Expressed in tormogen cell in proboscis and 42 other cell types or tissues"/>
</dbReference>
<dbReference type="ExpressionAtlas" id="P13582">
    <property type="expression patterns" value="baseline and differential"/>
</dbReference>
<dbReference type="GO" id="GO:0005576">
    <property type="term" value="C:extracellular region"/>
    <property type="evidence" value="ECO:0000304"/>
    <property type="project" value="Reactome"/>
</dbReference>
<dbReference type="GO" id="GO:0005615">
    <property type="term" value="C:extracellular space"/>
    <property type="evidence" value="ECO:0000314"/>
    <property type="project" value="FlyBase"/>
</dbReference>
<dbReference type="GO" id="GO:0098595">
    <property type="term" value="C:perivitelline space"/>
    <property type="evidence" value="ECO:0000314"/>
    <property type="project" value="FlyBase"/>
</dbReference>
<dbReference type="GO" id="GO:0046872">
    <property type="term" value="F:metal ion binding"/>
    <property type="evidence" value="ECO:0007669"/>
    <property type="project" value="UniProtKB-KW"/>
</dbReference>
<dbReference type="GO" id="GO:0004252">
    <property type="term" value="F:serine-type endopeptidase activity"/>
    <property type="evidence" value="ECO:0000314"/>
    <property type="project" value="FlyBase"/>
</dbReference>
<dbReference type="GO" id="GO:0009950">
    <property type="term" value="P:dorsal/ventral axis specification"/>
    <property type="evidence" value="ECO:0000315"/>
    <property type="project" value="FlyBase"/>
</dbReference>
<dbReference type="GO" id="GO:0009953">
    <property type="term" value="P:dorsal/ventral pattern formation"/>
    <property type="evidence" value="ECO:0000315"/>
    <property type="project" value="UniProtKB"/>
</dbReference>
<dbReference type="GO" id="GO:0007311">
    <property type="term" value="P:maternal specification of dorsal/ventral axis, oocyte, germ-line encoded"/>
    <property type="evidence" value="ECO:0000304"/>
    <property type="project" value="FlyBase"/>
</dbReference>
<dbReference type="GO" id="GO:0006508">
    <property type="term" value="P:proteolysis"/>
    <property type="evidence" value="ECO:0000314"/>
    <property type="project" value="FlyBase"/>
</dbReference>
<dbReference type="GO" id="GO:0160032">
    <property type="term" value="P:Toll receptor ligand protein activation cascade"/>
    <property type="evidence" value="ECO:0000314"/>
    <property type="project" value="FlyBase"/>
</dbReference>
<dbReference type="GO" id="GO:0007370">
    <property type="term" value="P:ventral furrow formation"/>
    <property type="evidence" value="ECO:0000315"/>
    <property type="project" value="UniProtKB"/>
</dbReference>
<dbReference type="CDD" id="cd00190">
    <property type="entry name" value="Tryp_SPc"/>
    <property type="match status" value="1"/>
</dbReference>
<dbReference type="FunFam" id="2.40.10.10:FF:000028">
    <property type="entry name" value="Serine protease easter"/>
    <property type="match status" value="1"/>
</dbReference>
<dbReference type="FunFam" id="2.40.10.10:FF:000084">
    <property type="entry name" value="Serine protease easter"/>
    <property type="match status" value="1"/>
</dbReference>
<dbReference type="FunFam" id="3.30.1640.30:FF:000005">
    <property type="entry name" value="Serine protease easter"/>
    <property type="match status" value="1"/>
</dbReference>
<dbReference type="Gene3D" id="3.30.1640.30">
    <property type="match status" value="1"/>
</dbReference>
<dbReference type="Gene3D" id="2.40.10.10">
    <property type="entry name" value="Trypsin-like serine proteases"/>
    <property type="match status" value="2"/>
</dbReference>
<dbReference type="InterPro" id="IPR022700">
    <property type="entry name" value="CLIP"/>
</dbReference>
<dbReference type="InterPro" id="IPR038565">
    <property type="entry name" value="CLIP_sf"/>
</dbReference>
<dbReference type="InterPro" id="IPR009003">
    <property type="entry name" value="Peptidase_S1_PA"/>
</dbReference>
<dbReference type="InterPro" id="IPR043504">
    <property type="entry name" value="Peptidase_S1_PA_chymotrypsin"/>
</dbReference>
<dbReference type="InterPro" id="IPR001314">
    <property type="entry name" value="Peptidase_S1A"/>
</dbReference>
<dbReference type="InterPro" id="IPR051487">
    <property type="entry name" value="Ser/Thr_Proteases_Immune/Dev"/>
</dbReference>
<dbReference type="InterPro" id="IPR001254">
    <property type="entry name" value="Trypsin_dom"/>
</dbReference>
<dbReference type="InterPro" id="IPR018114">
    <property type="entry name" value="TRYPSIN_HIS"/>
</dbReference>
<dbReference type="InterPro" id="IPR033116">
    <property type="entry name" value="TRYPSIN_SER"/>
</dbReference>
<dbReference type="PANTHER" id="PTHR24256">
    <property type="entry name" value="TRYPTASE-RELATED"/>
    <property type="match status" value="1"/>
</dbReference>
<dbReference type="Pfam" id="PF12032">
    <property type="entry name" value="CLIP"/>
    <property type="match status" value="1"/>
</dbReference>
<dbReference type="Pfam" id="PF00089">
    <property type="entry name" value="Trypsin"/>
    <property type="match status" value="1"/>
</dbReference>
<dbReference type="PRINTS" id="PR00722">
    <property type="entry name" value="CHYMOTRYPSIN"/>
</dbReference>
<dbReference type="SMART" id="SM00680">
    <property type="entry name" value="CLIP"/>
    <property type="match status" value="1"/>
</dbReference>
<dbReference type="SMART" id="SM00020">
    <property type="entry name" value="Tryp_SPc"/>
    <property type="match status" value="1"/>
</dbReference>
<dbReference type="SUPFAM" id="SSF50494">
    <property type="entry name" value="Trypsin-like serine proteases"/>
    <property type="match status" value="1"/>
</dbReference>
<dbReference type="PROSITE" id="PS51888">
    <property type="entry name" value="CLIP"/>
    <property type="match status" value="1"/>
</dbReference>
<dbReference type="PROSITE" id="PS50240">
    <property type="entry name" value="TRYPSIN_DOM"/>
    <property type="match status" value="1"/>
</dbReference>
<dbReference type="PROSITE" id="PS00134">
    <property type="entry name" value="TRYPSIN_HIS"/>
    <property type="match status" value="1"/>
</dbReference>
<dbReference type="PROSITE" id="PS00135">
    <property type="entry name" value="TRYPSIN_SER"/>
    <property type="match status" value="1"/>
</dbReference>
<gene>
    <name evidence="17" type="primary">ea</name>
    <name evidence="17" type="ORF">CG4920</name>
</gene>
<name>EAST_DROME</name>
<organism evidence="18">
    <name type="scientific">Drosophila melanogaster</name>
    <name type="common">Fruit fly</name>
    <dbReference type="NCBI Taxonomy" id="7227"/>
    <lineage>
        <taxon>Eukaryota</taxon>
        <taxon>Metazoa</taxon>
        <taxon>Ecdysozoa</taxon>
        <taxon>Arthropoda</taxon>
        <taxon>Hexapoda</taxon>
        <taxon>Insecta</taxon>
        <taxon>Pterygota</taxon>
        <taxon>Neoptera</taxon>
        <taxon>Endopterygota</taxon>
        <taxon>Diptera</taxon>
        <taxon>Brachycera</taxon>
        <taxon>Muscomorpha</taxon>
        <taxon>Ephydroidea</taxon>
        <taxon>Drosophilidae</taxon>
        <taxon>Drosophila</taxon>
        <taxon>Sophophora</taxon>
    </lineage>
</organism>
<protein>
    <recommendedName>
        <fullName evidence="15">Serine protease ea</fullName>
        <ecNumber evidence="5">3.4.21.-</ecNumber>
    </recommendedName>
    <alternativeName>
        <fullName evidence="17">Protein easter</fullName>
    </alternativeName>
</protein>
<comment type="function">
    <text evidence="8 12 13 14">Component of the extracellular signaling pathway that establishes the dorsal-ventral pathway of the embryo (PubMed:12493753, PubMed:2107028, PubMed:9477324). A protease cascade involving ndl, gd, snk and ea results in activation of the spz Toll receptor ligand; acts downstream of ndl, gd and snk and is required for proteolytic processing of spz (PubMed:20605458, PubMed:9477324). Activation of ea requires both activation of the ndl-gd-snk protease cascade and sulfation of a vitelline membrane component by pip (PubMed:20605458). Localized activation of the Toll receptor in the ventral region of the embryo defines cell identities along the dorsal-ventral continuum (PubMed:9477324).</text>
</comment>
<comment type="activity regulation">
    <text evidence="9 10 11 12">Activated proteolytically by snk; activation requires both activation of the ndl-gd-snk protease cascade and sulfation of a vitelline membrane component by pip (PubMed:16566925, PubMed:20605458). Inhibited by binding of the serpin Spn27A (PubMed:14654000, PubMed:14667416).</text>
</comment>
<comment type="subunit">
    <text evidence="10 12">Interacts with Spn27A; the two proteins are covalently linked leading to inhibition of ea catalytic activity (PubMed:14667416). Interacts (via Peptidase domain) with snk (via N-terminal prodomain); leads to proteolytic activation of ea by snk (PubMed:20605458). Sulfation of a vitelline membrane component by pip is required for proteolytic cleavage of ea by snk but not for the interaction of ea with snk (PubMed:20605458).</text>
</comment>
<comment type="subcellular location">
    <subcellularLocation>
        <location evidence="14">Secreted</location>
    </subcellularLocation>
</comment>
<comment type="developmental stage">
    <text evidence="14">Expressed both maternally and zygotically.</text>
</comment>
<comment type="domain">
    <text evidence="7">The clip domain consists of 35-55 residues which are 'knitted' together usually by 3 conserved disulfide bonds forming a clip-like compact structure.</text>
</comment>
<comment type="PTM">
    <text evidence="10 12 16">Proteolytically cleaved by snk (PubMed:20605458). Activation peptide and active catalytic domain remain associated by a disulfide bond (Probable). Processed ea/easter is present in extremely low amounts in the early embryo as it is rapidly converted into a high molecular mass complex made up of ea covalently bound to the serpin Spn27A (Probable) (PubMed:14667416). Zymogen activation is also controlled by a negative feedback loop from Dorsal.</text>
</comment>
<comment type="similarity">
    <text evidence="7">Belongs to the peptidase S1 family. CLIP subfamily.</text>
</comment>
<proteinExistence type="evidence at protein level"/>
<sequence>MLKPSIICLFLGILAKSSAGQFYFPNEAAQVPNYGRCITPNRERALCIHLEDCKYLYGLLTTTPLRDTDRLYLSRSQCGYTNGKVLICCPDRYRESSSETTPPPKPNVTSNSLLPLPGQCGNILSNRIYGGMKTKIDEFPWMALIEYTKSQGKKGHHCGGSLISTRYVITASHCVNGKALPTDWRLSGVRLGEWDTNTNPDCEVDVRGMKDCAPPHLDVPVERTIPHPDYIPASKNQVNDIALLRLAQQVEYTDFVRPICLPLDVNLRSATFDGITMDVAGWGKTEQLSASNLKLKAAVEGSRMDECQNVYSSQDILLEDTQMCAGGKEGVDSCRGDSGGPLIGLDTNKVNTYYFLAGVVSFGPTPCGLAGWPGVYTLVGKYVDWIQNTIES</sequence>
<reference key="1">
    <citation type="journal article" date="1989" name="Cell">
        <title>The role of easter, an apparent serine protease, in organizing the dorsal-ventral pattern of the Drosophila embryo.</title>
        <authorList>
            <person name="Chasan R."/>
            <person name="Anderson K.V."/>
        </authorList>
    </citation>
    <scope>NUCLEOTIDE SEQUENCE [MRNA]</scope>
</reference>
<reference key="2">
    <citation type="journal article" date="2000" name="Science">
        <title>The genome sequence of Drosophila melanogaster.</title>
        <authorList>
            <person name="Adams M.D."/>
            <person name="Celniker S.E."/>
            <person name="Holt R.A."/>
            <person name="Evans C.A."/>
            <person name="Gocayne J.D."/>
            <person name="Amanatides P.G."/>
            <person name="Scherer S.E."/>
            <person name="Li P.W."/>
            <person name="Hoskins R.A."/>
            <person name="Galle R.F."/>
            <person name="George R.A."/>
            <person name="Lewis S.E."/>
            <person name="Richards S."/>
            <person name="Ashburner M."/>
            <person name="Henderson S.N."/>
            <person name="Sutton G.G."/>
            <person name="Wortman J.R."/>
            <person name="Yandell M.D."/>
            <person name="Zhang Q."/>
            <person name="Chen L.X."/>
            <person name="Brandon R.C."/>
            <person name="Rogers Y.-H.C."/>
            <person name="Blazej R.G."/>
            <person name="Champe M."/>
            <person name="Pfeiffer B.D."/>
            <person name="Wan K.H."/>
            <person name="Doyle C."/>
            <person name="Baxter E.G."/>
            <person name="Helt G."/>
            <person name="Nelson C.R."/>
            <person name="Miklos G.L.G."/>
            <person name="Abril J.F."/>
            <person name="Agbayani A."/>
            <person name="An H.-J."/>
            <person name="Andrews-Pfannkoch C."/>
            <person name="Baldwin D."/>
            <person name="Ballew R.M."/>
            <person name="Basu A."/>
            <person name="Baxendale J."/>
            <person name="Bayraktaroglu L."/>
            <person name="Beasley E.M."/>
            <person name="Beeson K.Y."/>
            <person name="Benos P.V."/>
            <person name="Berman B.P."/>
            <person name="Bhandari D."/>
            <person name="Bolshakov S."/>
            <person name="Borkova D."/>
            <person name="Botchan M.R."/>
            <person name="Bouck J."/>
            <person name="Brokstein P."/>
            <person name="Brottier P."/>
            <person name="Burtis K.C."/>
            <person name="Busam D.A."/>
            <person name="Butler H."/>
            <person name="Cadieu E."/>
            <person name="Center A."/>
            <person name="Chandra I."/>
            <person name="Cherry J.M."/>
            <person name="Cawley S."/>
            <person name="Dahlke C."/>
            <person name="Davenport L.B."/>
            <person name="Davies P."/>
            <person name="de Pablos B."/>
            <person name="Delcher A."/>
            <person name="Deng Z."/>
            <person name="Mays A.D."/>
            <person name="Dew I."/>
            <person name="Dietz S.M."/>
            <person name="Dodson K."/>
            <person name="Doup L.E."/>
            <person name="Downes M."/>
            <person name="Dugan-Rocha S."/>
            <person name="Dunkov B.C."/>
            <person name="Dunn P."/>
            <person name="Durbin K.J."/>
            <person name="Evangelista C.C."/>
            <person name="Ferraz C."/>
            <person name="Ferriera S."/>
            <person name="Fleischmann W."/>
            <person name="Fosler C."/>
            <person name="Gabrielian A.E."/>
            <person name="Garg N.S."/>
            <person name="Gelbart W.M."/>
            <person name="Glasser K."/>
            <person name="Glodek A."/>
            <person name="Gong F."/>
            <person name="Gorrell J.H."/>
            <person name="Gu Z."/>
            <person name="Guan P."/>
            <person name="Harris M."/>
            <person name="Harris N.L."/>
            <person name="Harvey D.A."/>
            <person name="Heiman T.J."/>
            <person name="Hernandez J.R."/>
            <person name="Houck J."/>
            <person name="Hostin D."/>
            <person name="Houston K.A."/>
            <person name="Howland T.J."/>
            <person name="Wei M.-H."/>
            <person name="Ibegwam C."/>
            <person name="Jalali M."/>
            <person name="Kalush F."/>
            <person name="Karpen G.H."/>
            <person name="Ke Z."/>
            <person name="Kennison J.A."/>
            <person name="Ketchum K.A."/>
            <person name="Kimmel B.E."/>
            <person name="Kodira C.D."/>
            <person name="Kraft C.L."/>
            <person name="Kravitz S."/>
            <person name="Kulp D."/>
            <person name="Lai Z."/>
            <person name="Lasko P."/>
            <person name="Lei Y."/>
            <person name="Levitsky A.A."/>
            <person name="Li J.H."/>
            <person name="Li Z."/>
            <person name="Liang Y."/>
            <person name="Lin X."/>
            <person name="Liu X."/>
            <person name="Mattei B."/>
            <person name="McIntosh T.C."/>
            <person name="McLeod M.P."/>
            <person name="McPherson D."/>
            <person name="Merkulov G."/>
            <person name="Milshina N.V."/>
            <person name="Mobarry C."/>
            <person name="Morris J."/>
            <person name="Moshrefi A."/>
            <person name="Mount S.M."/>
            <person name="Moy M."/>
            <person name="Murphy B."/>
            <person name="Murphy L."/>
            <person name="Muzny D.M."/>
            <person name="Nelson D.L."/>
            <person name="Nelson D.R."/>
            <person name="Nelson K.A."/>
            <person name="Nixon K."/>
            <person name="Nusskern D.R."/>
            <person name="Pacleb J.M."/>
            <person name="Palazzolo M."/>
            <person name="Pittman G.S."/>
            <person name="Pan S."/>
            <person name="Pollard J."/>
            <person name="Puri V."/>
            <person name="Reese M.G."/>
            <person name="Reinert K."/>
            <person name="Remington K."/>
            <person name="Saunders R.D.C."/>
            <person name="Scheeler F."/>
            <person name="Shen H."/>
            <person name="Shue B.C."/>
            <person name="Siden-Kiamos I."/>
            <person name="Simpson M."/>
            <person name="Skupski M.P."/>
            <person name="Smith T.J."/>
            <person name="Spier E."/>
            <person name="Spradling A.C."/>
            <person name="Stapleton M."/>
            <person name="Strong R."/>
            <person name="Sun E."/>
            <person name="Svirskas R."/>
            <person name="Tector C."/>
            <person name="Turner R."/>
            <person name="Venter E."/>
            <person name="Wang A.H."/>
            <person name="Wang X."/>
            <person name="Wang Z.-Y."/>
            <person name="Wassarman D.A."/>
            <person name="Weinstock G.M."/>
            <person name="Weissenbach J."/>
            <person name="Williams S.M."/>
            <person name="Woodage T."/>
            <person name="Worley K.C."/>
            <person name="Wu D."/>
            <person name="Yang S."/>
            <person name="Yao Q.A."/>
            <person name="Ye J."/>
            <person name="Yeh R.-F."/>
            <person name="Zaveri J.S."/>
            <person name="Zhan M."/>
            <person name="Zhang G."/>
            <person name="Zhao Q."/>
            <person name="Zheng L."/>
            <person name="Zheng X.H."/>
            <person name="Zhong F.N."/>
            <person name="Zhong W."/>
            <person name="Zhou X."/>
            <person name="Zhu S.C."/>
            <person name="Zhu X."/>
            <person name="Smith H.O."/>
            <person name="Gibbs R.A."/>
            <person name="Myers E.W."/>
            <person name="Rubin G.M."/>
            <person name="Venter J.C."/>
        </authorList>
    </citation>
    <scope>NUCLEOTIDE SEQUENCE [LARGE SCALE GENOMIC DNA]</scope>
    <source>
        <strain>Berkeley</strain>
    </source>
</reference>
<reference key="3">
    <citation type="journal article" date="2002" name="Genome Biol.">
        <title>Annotation of the Drosophila melanogaster euchromatic genome: a systematic review.</title>
        <authorList>
            <person name="Misra S."/>
            <person name="Crosby M.A."/>
            <person name="Mungall C.J."/>
            <person name="Matthews B.B."/>
            <person name="Campbell K.S."/>
            <person name="Hradecky P."/>
            <person name="Huang Y."/>
            <person name="Kaminker J.S."/>
            <person name="Millburn G.H."/>
            <person name="Prochnik S.E."/>
            <person name="Smith C.D."/>
            <person name="Tupy J.L."/>
            <person name="Whitfield E.J."/>
            <person name="Bayraktaroglu L."/>
            <person name="Berman B.P."/>
            <person name="Bettencourt B.R."/>
            <person name="Celniker S.E."/>
            <person name="de Grey A.D.N.J."/>
            <person name="Drysdale R.A."/>
            <person name="Harris N.L."/>
            <person name="Richter J."/>
            <person name="Russo S."/>
            <person name="Schroeder A.J."/>
            <person name="Shu S.Q."/>
            <person name="Stapleton M."/>
            <person name="Yamada C."/>
            <person name="Ashburner M."/>
            <person name="Gelbart W.M."/>
            <person name="Rubin G.M."/>
            <person name="Lewis S.E."/>
        </authorList>
    </citation>
    <scope>GENOME REANNOTATION</scope>
    <source>
        <strain>Berkeley</strain>
    </source>
</reference>
<reference key="4">
    <citation type="submission" date="2003-08" db="EMBL/GenBank/DDBJ databases">
        <authorList>
            <person name="Stapleton M."/>
            <person name="Brokstein P."/>
            <person name="Hong L."/>
            <person name="Agbayani A."/>
            <person name="Carlson J.W."/>
            <person name="Champe M."/>
            <person name="Chavez C."/>
            <person name="Dorsett V."/>
            <person name="Dresnek D."/>
            <person name="Farfan D."/>
            <person name="Frise E."/>
            <person name="George R.A."/>
            <person name="Gonzalez M."/>
            <person name="Guarin H."/>
            <person name="Kronmiller B."/>
            <person name="Li P.W."/>
            <person name="Liao G."/>
            <person name="Miranda A."/>
            <person name="Mungall C.J."/>
            <person name="Nunoo J."/>
            <person name="Pacleb J.M."/>
            <person name="Paragas V."/>
            <person name="Park S."/>
            <person name="Patel S."/>
            <person name="Phouanenavong S."/>
            <person name="Wan K.H."/>
            <person name="Yu C."/>
            <person name="Lewis S.E."/>
            <person name="Rubin G.M."/>
            <person name="Celniker S.E."/>
        </authorList>
    </citation>
    <scope>NUCLEOTIDE SEQUENCE [LARGE SCALE MRNA]</scope>
    <source>
        <strain>Berkeley</strain>
        <tissue>Embryo</tissue>
    </source>
</reference>
<reference key="5">
    <citation type="journal article" date="1998" name="Development">
        <title>Positive and negative regulation of Easter, a member of the serine protease family that controls dorsal-ventral patterning in the Drosophila embryo.</title>
        <authorList>
            <person name="Misra S."/>
            <person name="Hecht P."/>
            <person name="Maeda R."/>
            <person name="Anderson K.V."/>
        </authorList>
    </citation>
    <scope>FUNCTION</scope>
    <scope>SUBCELLULAR LOCATION</scope>
    <scope>DEVELOPMENTAL STAGE</scope>
    <scope>CLEAVAGE EVENTS</scope>
</reference>
<reference key="6">
    <citation type="journal article" date="1998" name="Mech. Dev.">
        <title>Proteolytic processing of the Drosophila Spatzle protein by easter generates a dimeric NGF-like molecule with ventralising activity.</title>
        <authorList>
            <person name="DeLotto Y."/>
            <person name="DeLotto R."/>
        </authorList>
    </citation>
    <scope>CLEAVAGE OF SPAETZLE</scope>
</reference>
<reference key="7">
    <citation type="journal article" date="1990" name="Cell">
        <title>Dominant and recessive alleles of the Drosophila easter gene are point mutations at conserved sites in the serine protease catalytic domain.</title>
        <authorList>
            <person name="Jin Y."/>
            <person name="Anderson K.V."/>
        </authorList>
    </citation>
    <scope>FUNCTION</scope>
    <scope>MUTAGENESIS</scope>
</reference>
<reference key="8">
    <citation type="journal article" date="2003" name="Curr. Biol.">
        <title>A serpin regulates dorsal-ventral axis formation in the Drosophila embryo.</title>
        <authorList>
            <person name="Ligoxygakis P."/>
            <person name="Roth S."/>
            <person name="Reichhart J.M."/>
        </authorList>
    </citation>
    <scope>ACTIVITY REGULATION BY SPN27A</scope>
</reference>
<reference key="9">
    <citation type="journal article" date="2003" name="Dev. Cell">
        <title>Spatial regulation of developmental signaling by a serpin.</title>
        <authorList>
            <person name="Hashimoto C."/>
            <person name="Kim D.R."/>
            <person name="Weiss L.A."/>
            <person name="Miller J.W."/>
            <person name="Morisato D."/>
        </authorList>
    </citation>
    <scope>ACTIVITY REGULATION BY SPN27A</scope>
    <scope>INTERACTION WITH SPN27A</scope>
    <scope>PROTEOLYTIC CLEAVAGE</scope>
</reference>
<reference key="10">
    <citation type="journal article" date="2003" name="J. Biol. Chem.">
        <title>Three-dimensional models of proteases involved in patterning of the Drosophila Embryo. Crucial role of predicted cation binding sites.</title>
        <authorList>
            <person name="Rose T."/>
            <person name="LeMosy E.K."/>
            <person name="Cantwell A.M."/>
            <person name="Banerjee-Roy D."/>
            <person name="Skeath J.B."/>
            <person name="Di Cera E."/>
        </authorList>
    </citation>
    <scope>FUNCTION</scope>
    <scope>MUTAGENESIS OF GLU-193; SER-338 AND PRO-373</scope>
</reference>
<reference key="11">
    <citation type="journal article" date="2006" name="FEBS Lett.">
        <title>Spatially dependent activation of the patterning protease, Easter.</title>
        <authorList>
            <person name="LeMosy E.K."/>
        </authorList>
    </citation>
    <scope>ACTIVITY REGULATION</scope>
    <scope>MUTAGENESIS OF ARG-127 AND SER-338</scope>
</reference>
<reference key="12">
    <citation type="journal article" date="2010" name="Curr. Biol.">
        <title>Pipe-dependent ventral processing of Easter by Snake is the defining step in Drosophila embryo DV axis formation.</title>
        <authorList>
            <person name="Cho Y.S."/>
            <person name="Stevens L.M."/>
            <person name="Stein D."/>
        </authorList>
    </citation>
    <scope>FUNCTION</scope>
    <scope>ACTIVITY REGULATION</scope>
    <scope>INTERACTION WITH SNK</scope>
    <scope>PROTEOLYTICALLY CLEAVED</scope>
</reference>
<keyword id="KW-0106">Calcium</keyword>
<keyword id="KW-0217">Developmental protein</keyword>
<keyword id="KW-1015">Disulfide bond</keyword>
<keyword id="KW-0325">Glycoprotein</keyword>
<keyword id="KW-0378">Hydrolase</keyword>
<keyword id="KW-0479">Metal-binding</keyword>
<keyword id="KW-0645">Protease</keyword>
<keyword id="KW-1185">Reference proteome</keyword>
<keyword id="KW-0964">Secreted</keyword>
<keyword id="KW-0720">Serine protease</keyword>
<keyword id="KW-0732">Signal</keyword>
<keyword id="KW-0865">Zymogen</keyword>